<organism>
    <name type="scientific">Drosophila melanogaster</name>
    <name type="common">Fruit fly</name>
    <dbReference type="NCBI Taxonomy" id="7227"/>
    <lineage>
        <taxon>Eukaryota</taxon>
        <taxon>Metazoa</taxon>
        <taxon>Ecdysozoa</taxon>
        <taxon>Arthropoda</taxon>
        <taxon>Hexapoda</taxon>
        <taxon>Insecta</taxon>
        <taxon>Pterygota</taxon>
        <taxon>Neoptera</taxon>
        <taxon>Endopterygota</taxon>
        <taxon>Diptera</taxon>
        <taxon>Brachycera</taxon>
        <taxon>Muscomorpha</taxon>
        <taxon>Ephydroidea</taxon>
        <taxon>Drosophilidae</taxon>
        <taxon>Drosophila</taxon>
        <taxon>Sophophora</taxon>
    </lineage>
</organism>
<feature type="chain" id="PRO_0000211433" description="Sulfiredoxin">
    <location>
        <begin position="1"/>
        <end position="162"/>
    </location>
</feature>
<feature type="binding site" evidence="2">
    <location>
        <begin position="122"/>
        <end position="125"/>
    </location>
    <ligand>
        <name>ATP</name>
        <dbReference type="ChEBI" id="CHEBI:30616"/>
    </ligand>
</feature>
<feature type="modified residue" description="Omega-N-methylarginine" evidence="2">
    <location>
        <position position="24"/>
    </location>
</feature>
<feature type="modified residue" description="Omega-N-methylarginine" evidence="2">
    <location>
        <position position="38"/>
    </location>
</feature>
<feature type="disulfide bond" description="Interchain" evidence="1">
    <location>
        <position position="123"/>
    </location>
</feature>
<comment type="function">
    <text evidence="2 3">Contributes to oxidative stress resistance by reducing cysteine-sulfinic acid formed under exposure to oxidants in a peroxiredoxin (PubMed:33920774). May catalyze the reduction in a multi-step process by acting both as a specific phosphotransferase and a thioltransferase (By similarity).</text>
</comment>
<comment type="catalytic activity">
    <reaction evidence="3">
        <text>S-hydroxy-S-oxy-L-cysteinyl-[peroxiredoxin] + [protein]-dithiol + ATP = S-hydroxy-L-cysteinyl-[peroxiredoxin] + [protein]-disulfide + ADP + phosphate</text>
        <dbReference type="Rhea" id="RHEA:17545"/>
        <dbReference type="Rhea" id="RHEA-COMP:10593"/>
        <dbReference type="Rhea" id="RHEA-COMP:10594"/>
        <dbReference type="Rhea" id="RHEA-COMP:13681"/>
        <dbReference type="Rhea" id="RHEA-COMP:17976"/>
        <dbReference type="ChEBI" id="CHEBI:29950"/>
        <dbReference type="ChEBI" id="CHEBI:30616"/>
        <dbReference type="ChEBI" id="CHEBI:43474"/>
        <dbReference type="ChEBI" id="CHEBI:50058"/>
        <dbReference type="ChEBI" id="CHEBI:61973"/>
        <dbReference type="ChEBI" id="CHEBI:61974"/>
        <dbReference type="ChEBI" id="CHEBI:456216"/>
        <dbReference type="EC" id="1.8.98.2"/>
    </reaction>
</comment>
<comment type="disruption phenotype">
    <text evidence="3">Five day old adults display increased levels of hyperoxidized forms of peroxiredoxins, and both males and females show increased locomotor activity (PubMed:33920774). No effect on lifespan under normal or oxidative stress conditions (PubMed:33920774).</text>
</comment>
<comment type="similarity">
    <text evidence="5">Belongs to the sulfiredoxin family.</text>
</comment>
<reference key="1">
    <citation type="journal article" date="2000" name="Science">
        <title>The genome sequence of Drosophila melanogaster.</title>
        <authorList>
            <person name="Adams M.D."/>
            <person name="Celniker S.E."/>
            <person name="Holt R.A."/>
            <person name="Evans C.A."/>
            <person name="Gocayne J.D."/>
            <person name="Amanatides P.G."/>
            <person name="Scherer S.E."/>
            <person name="Li P.W."/>
            <person name="Hoskins R.A."/>
            <person name="Galle R.F."/>
            <person name="George R.A."/>
            <person name="Lewis S.E."/>
            <person name="Richards S."/>
            <person name="Ashburner M."/>
            <person name="Henderson S.N."/>
            <person name="Sutton G.G."/>
            <person name="Wortman J.R."/>
            <person name="Yandell M.D."/>
            <person name="Zhang Q."/>
            <person name="Chen L.X."/>
            <person name="Brandon R.C."/>
            <person name="Rogers Y.-H.C."/>
            <person name="Blazej R.G."/>
            <person name="Champe M."/>
            <person name="Pfeiffer B.D."/>
            <person name="Wan K.H."/>
            <person name="Doyle C."/>
            <person name="Baxter E.G."/>
            <person name="Helt G."/>
            <person name="Nelson C.R."/>
            <person name="Miklos G.L.G."/>
            <person name="Abril J.F."/>
            <person name="Agbayani A."/>
            <person name="An H.-J."/>
            <person name="Andrews-Pfannkoch C."/>
            <person name="Baldwin D."/>
            <person name="Ballew R.M."/>
            <person name="Basu A."/>
            <person name="Baxendale J."/>
            <person name="Bayraktaroglu L."/>
            <person name="Beasley E.M."/>
            <person name="Beeson K.Y."/>
            <person name="Benos P.V."/>
            <person name="Berman B.P."/>
            <person name="Bhandari D."/>
            <person name="Bolshakov S."/>
            <person name="Borkova D."/>
            <person name="Botchan M.R."/>
            <person name="Bouck J."/>
            <person name="Brokstein P."/>
            <person name="Brottier P."/>
            <person name="Burtis K.C."/>
            <person name="Busam D.A."/>
            <person name="Butler H."/>
            <person name="Cadieu E."/>
            <person name="Center A."/>
            <person name="Chandra I."/>
            <person name="Cherry J.M."/>
            <person name="Cawley S."/>
            <person name="Dahlke C."/>
            <person name="Davenport L.B."/>
            <person name="Davies P."/>
            <person name="de Pablos B."/>
            <person name="Delcher A."/>
            <person name="Deng Z."/>
            <person name="Mays A.D."/>
            <person name="Dew I."/>
            <person name="Dietz S.M."/>
            <person name="Dodson K."/>
            <person name="Doup L.E."/>
            <person name="Downes M."/>
            <person name="Dugan-Rocha S."/>
            <person name="Dunkov B.C."/>
            <person name="Dunn P."/>
            <person name="Durbin K.J."/>
            <person name="Evangelista C.C."/>
            <person name="Ferraz C."/>
            <person name="Ferriera S."/>
            <person name="Fleischmann W."/>
            <person name="Fosler C."/>
            <person name="Gabrielian A.E."/>
            <person name="Garg N.S."/>
            <person name="Gelbart W.M."/>
            <person name="Glasser K."/>
            <person name="Glodek A."/>
            <person name="Gong F."/>
            <person name="Gorrell J.H."/>
            <person name="Gu Z."/>
            <person name="Guan P."/>
            <person name="Harris M."/>
            <person name="Harris N.L."/>
            <person name="Harvey D.A."/>
            <person name="Heiman T.J."/>
            <person name="Hernandez J.R."/>
            <person name="Houck J."/>
            <person name="Hostin D."/>
            <person name="Houston K.A."/>
            <person name="Howland T.J."/>
            <person name="Wei M.-H."/>
            <person name="Ibegwam C."/>
            <person name="Jalali M."/>
            <person name="Kalush F."/>
            <person name="Karpen G.H."/>
            <person name="Ke Z."/>
            <person name="Kennison J.A."/>
            <person name="Ketchum K.A."/>
            <person name="Kimmel B.E."/>
            <person name="Kodira C.D."/>
            <person name="Kraft C.L."/>
            <person name="Kravitz S."/>
            <person name="Kulp D."/>
            <person name="Lai Z."/>
            <person name="Lasko P."/>
            <person name="Lei Y."/>
            <person name="Levitsky A.A."/>
            <person name="Li J.H."/>
            <person name="Li Z."/>
            <person name="Liang Y."/>
            <person name="Lin X."/>
            <person name="Liu X."/>
            <person name="Mattei B."/>
            <person name="McIntosh T.C."/>
            <person name="McLeod M.P."/>
            <person name="McPherson D."/>
            <person name="Merkulov G."/>
            <person name="Milshina N.V."/>
            <person name="Mobarry C."/>
            <person name="Morris J."/>
            <person name="Moshrefi A."/>
            <person name="Mount S.M."/>
            <person name="Moy M."/>
            <person name="Murphy B."/>
            <person name="Murphy L."/>
            <person name="Muzny D.M."/>
            <person name="Nelson D.L."/>
            <person name="Nelson D.R."/>
            <person name="Nelson K.A."/>
            <person name="Nixon K."/>
            <person name="Nusskern D.R."/>
            <person name="Pacleb J.M."/>
            <person name="Palazzolo M."/>
            <person name="Pittman G.S."/>
            <person name="Pan S."/>
            <person name="Pollard J."/>
            <person name="Puri V."/>
            <person name="Reese M.G."/>
            <person name="Reinert K."/>
            <person name="Remington K."/>
            <person name="Saunders R.D.C."/>
            <person name="Scheeler F."/>
            <person name="Shen H."/>
            <person name="Shue B.C."/>
            <person name="Siden-Kiamos I."/>
            <person name="Simpson M."/>
            <person name="Skupski M.P."/>
            <person name="Smith T.J."/>
            <person name="Spier E."/>
            <person name="Spradling A.C."/>
            <person name="Stapleton M."/>
            <person name="Strong R."/>
            <person name="Sun E."/>
            <person name="Svirskas R."/>
            <person name="Tector C."/>
            <person name="Turner R."/>
            <person name="Venter E."/>
            <person name="Wang A.H."/>
            <person name="Wang X."/>
            <person name="Wang Z.-Y."/>
            <person name="Wassarman D.A."/>
            <person name="Weinstock G.M."/>
            <person name="Weissenbach J."/>
            <person name="Williams S.M."/>
            <person name="Woodage T."/>
            <person name="Worley K.C."/>
            <person name="Wu D."/>
            <person name="Yang S."/>
            <person name="Yao Q.A."/>
            <person name="Ye J."/>
            <person name="Yeh R.-F."/>
            <person name="Zaveri J.S."/>
            <person name="Zhan M."/>
            <person name="Zhang G."/>
            <person name="Zhao Q."/>
            <person name="Zheng L."/>
            <person name="Zheng X.H."/>
            <person name="Zhong F.N."/>
            <person name="Zhong W."/>
            <person name="Zhou X."/>
            <person name="Zhu S.C."/>
            <person name="Zhu X."/>
            <person name="Smith H.O."/>
            <person name="Gibbs R.A."/>
            <person name="Myers E.W."/>
            <person name="Rubin G.M."/>
            <person name="Venter J.C."/>
        </authorList>
    </citation>
    <scope>NUCLEOTIDE SEQUENCE [LARGE SCALE GENOMIC DNA]</scope>
    <source>
        <strain>Berkeley</strain>
    </source>
</reference>
<reference key="2">
    <citation type="journal article" date="2002" name="Genome Biol.">
        <title>Annotation of the Drosophila melanogaster euchromatic genome: a systematic review.</title>
        <authorList>
            <person name="Misra S."/>
            <person name="Crosby M.A."/>
            <person name="Mungall C.J."/>
            <person name="Matthews B.B."/>
            <person name="Campbell K.S."/>
            <person name="Hradecky P."/>
            <person name="Huang Y."/>
            <person name="Kaminker J.S."/>
            <person name="Millburn G.H."/>
            <person name="Prochnik S.E."/>
            <person name="Smith C.D."/>
            <person name="Tupy J.L."/>
            <person name="Whitfield E.J."/>
            <person name="Bayraktaroglu L."/>
            <person name="Berman B.P."/>
            <person name="Bettencourt B.R."/>
            <person name="Celniker S.E."/>
            <person name="de Grey A.D.N.J."/>
            <person name="Drysdale R.A."/>
            <person name="Harris N.L."/>
            <person name="Richter J."/>
            <person name="Russo S."/>
            <person name="Schroeder A.J."/>
            <person name="Shu S.Q."/>
            <person name="Stapleton M."/>
            <person name="Yamada C."/>
            <person name="Ashburner M."/>
            <person name="Gelbart W.M."/>
            <person name="Rubin G.M."/>
            <person name="Lewis S.E."/>
        </authorList>
    </citation>
    <scope>GENOME REANNOTATION</scope>
    <source>
        <strain>Berkeley</strain>
    </source>
</reference>
<reference key="3">
    <citation type="submission" date="2005-06" db="EMBL/GenBank/DDBJ databases">
        <authorList>
            <person name="Stapleton M."/>
            <person name="Carlson J.W."/>
            <person name="Chavez C."/>
            <person name="Frise E."/>
            <person name="George R.A."/>
            <person name="Pacleb J.M."/>
            <person name="Park S."/>
            <person name="Wan K.H."/>
            <person name="Yu C."/>
            <person name="Celniker S.E."/>
        </authorList>
    </citation>
    <scope>NUCLEOTIDE SEQUENCE [LARGE SCALE MRNA]</scope>
    <source>
        <strain>Berkeley</strain>
        <tissue>Head</tissue>
    </source>
</reference>
<reference key="4">
    <citation type="submission" date="2016-07" db="EMBL/GenBank/DDBJ databases">
        <authorList>
            <person name="Wan K."/>
            <person name="Booth B."/>
            <person name="Spirohn K."/>
            <person name="Hao T."/>
            <person name="Hu Y."/>
            <person name="Calderwood M."/>
            <person name="Hill D."/>
            <person name="Mohr S."/>
            <person name="Vidal M."/>
            <person name="Celniker S."/>
            <person name="Perrimon N."/>
        </authorList>
    </citation>
    <scope>NUCLEOTIDE SEQUENCE [LARGE SCALE MRNA]</scope>
</reference>
<reference key="5">
    <citation type="journal article" date="2021" name="Antioxidants">
        <title>Hyperoxidation of Peroxiredoxins and Effects on Physiology of Drosophila.</title>
        <authorList>
            <person name="McGinnis A."/>
            <person name="Klichko V.I."/>
            <person name="Orr W.C."/>
            <person name="Radyuk S.N."/>
        </authorList>
    </citation>
    <scope>FUNCTION</scope>
    <scope>CATALYTIC ACTIVITY</scope>
    <scope>DISRUPTION PHENOTYPE</scope>
</reference>
<evidence type="ECO:0000250" key="1">
    <source>
        <dbReference type="UniProtKB" id="P36077"/>
    </source>
</evidence>
<evidence type="ECO:0000250" key="2">
    <source>
        <dbReference type="UniProtKB" id="Q9BYN0"/>
    </source>
</evidence>
<evidence type="ECO:0000269" key="3">
    <source>
    </source>
</evidence>
<evidence type="ECO:0000303" key="4">
    <source>
    </source>
</evidence>
<evidence type="ECO:0000305" key="5"/>
<evidence type="ECO:0000312" key="6">
    <source>
        <dbReference type="FlyBase" id="FBgn0030876"/>
    </source>
</evidence>
<name>SRX_DROME</name>
<keyword id="KW-0049">Antioxidant</keyword>
<keyword id="KW-0067">ATP-binding</keyword>
<keyword id="KW-1015">Disulfide bond</keyword>
<keyword id="KW-0488">Methylation</keyword>
<keyword id="KW-0547">Nucleotide-binding</keyword>
<keyword id="KW-0560">Oxidoreductase</keyword>
<keyword id="KW-1185">Reference proteome</keyword>
<protein>
    <recommendedName>
        <fullName evidence="4">Sulfiredoxin</fullName>
        <ecNumber evidence="3">1.8.98.2</ecNumber>
    </recommendedName>
</protein>
<sequence length="162" mass="18430">MEFISHFLRATSRRTAALGPILQRNRSEIIQKQSLTNRQAFRRYRSSCSTMDTTVHSAGIDETHLVPMSVIQRPIPSVLDEQKVQSLMETIKNETSEDEVPPIDLLWISGSEGGDYYFSFGGCHRFEAYKRLQRPTIKAKLVKSTLGDLYHYMGSSAPKYLA</sequence>
<dbReference type="EC" id="1.8.98.2" evidence="3"/>
<dbReference type="EMBL" id="AE014298">
    <property type="protein sequence ID" value="AAF48773.1"/>
    <property type="molecule type" value="Genomic_DNA"/>
</dbReference>
<dbReference type="EMBL" id="BT023718">
    <property type="protein sequence ID" value="AAY85118.1"/>
    <property type="molecule type" value="mRNA"/>
</dbReference>
<dbReference type="EMBL" id="KX531692">
    <property type="protein sequence ID" value="ANY27502.1"/>
    <property type="molecule type" value="mRNA"/>
</dbReference>
<dbReference type="RefSeq" id="NP_573250.1">
    <property type="nucleotide sequence ID" value="NM_133022.3"/>
</dbReference>
<dbReference type="SMR" id="Q9VX10"/>
<dbReference type="BioGRID" id="59090">
    <property type="interactions" value="1"/>
</dbReference>
<dbReference type="DIP" id="DIP-22411N"/>
<dbReference type="FunCoup" id="Q9VX10">
    <property type="interactions" value="74"/>
</dbReference>
<dbReference type="IntAct" id="Q9VX10">
    <property type="interactions" value="1"/>
</dbReference>
<dbReference type="STRING" id="7227.FBpp0074266"/>
<dbReference type="PaxDb" id="7227-FBpp0074266"/>
<dbReference type="DNASU" id="32768"/>
<dbReference type="EnsemblMetazoa" id="FBtr0074492">
    <property type="protein sequence ID" value="FBpp0074266"/>
    <property type="gene ID" value="FBgn0030876"/>
</dbReference>
<dbReference type="GeneID" id="32768"/>
<dbReference type="KEGG" id="dme:Dmel_CG6762"/>
<dbReference type="UCSC" id="CG6762-RA">
    <property type="organism name" value="d. melanogaster"/>
</dbReference>
<dbReference type="AGR" id="FB:FBgn0030876"/>
<dbReference type="CTD" id="32768"/>
<dbReference type="FlyBase" id="FBgn0030876">
    <property type="gene designation" value="Srx"/>
</dbReference>
<dbReference type="VEuPathDB" id="VectorBase:FBgn0030876"/>
<dbReference type="eggNOG" id="KOG3388">
    <property type="taxonomic scope" value="Eukaryota"/>
</dbReference>
<dbReference type="GeneTree" id="ENSGT00390000007832"/>
<dbReference type="InParanoid" id="Q9VX10"/>
<dbReference type="OMA" id="SQIRRPI"/>
<dbReference type="OrthoDB" id="10023328at2759"/>
<dbReference type="PhylomeDB" id="Q9VX10"/>
<dbReference type="Reactome" id="R-DME-9818027">
    <property type="pathway name" value="NFE2L2 regulating anti-oxidant/detoxification enzymes"/>
</dbReference>
<dbReference type="BioGRID-ORCS" id="32768">
    <property type="hits" value="0 hits in 1 CRISPR screen"/>
</dbReference>
<dbReference type="GenomeRNAi" id="32768"/>
<dbReference type="PRO" id="PR:Q9VX10"/>
<dbReference type="Proteomes" id="UP000000803">
    <property type="component" value="Chromosome X"/>
</dbReference>
<dbReference type="Bgee" id="FBgn0030876">
    <property type="expression patterns" value="Expressed in adult class III enteroendocrine cell in adult midgut (Drosophila) and 99 other cell types or tissues"/>
</dbReference>
<dbReference type="ExpressionAtlas" id="Q9VX10">
    <property type="expression patterns" value="baseline and differential"/>
</dbReference>
<dbReference type="GO" id="GO:0005737">
    <property type="term" value="C:cytoplasm"/>
    <property type="evidence" value="ECO:0000318"/>
    <property type="project" value="GO_Central"/>
</dbReference>
<dbReference type="GO" id="GO:0005829">
    <property type="term" value="C:cytosol"/>
    <property type="evidence" value="ECO:0000250"/>
    <property type="project" value="FlyBase"/>
</dbReference>
<dbReference type="GO" id="GO:0005524">
    <property type="term" value="F:ATP binding"/>
    <property type="evidence" value="ECO:0007669"/>
    <property type="project" value="UniProtKB-KW"/>
</dbReference>
<dbReference type="GO" id="GO:0032542">
    <property type="term" value="F:sulfiredoxin activity"/>
    <property type="evidence" value="ECO:0000315"/>
    <property type="project" value="FlyBase"/>
</dbReference>
<dbReference type="GO" id="GO:0098869">
    <property type="term" value="P:cellular oxidant detoxification"/>
    <property type="evidence" value="ECO:0000315"/>
    <property type="project" value="FlyBase"/>
</dbReference>
<dbReference type="GO" id="GO:0034599">
    <property type="term" value="P:cellular response to oxidative stress"/>
    <property type="evidence" value="ECO:0000318"/>
    <property type="project" value="GO_Central"/>
</dbReference>
<dbReference type="CDD" id="cd16395">
    <property type="entry name" value="Srx"/>
    <property type="match status" value="1"/>
</dbReference>
<dbReference type="FunFam" id="3.90.1530.10:FF:000001">
    <property type="entry name" value="Sulfiredoxin"/>
    <property type="match status" value="1"/>
</dbReference>
<dbReference type="Gene3D" id="3.90.1530.10">
    <property type="entry name" value="Conserved hypothetical protein from pyrococcus furiosus pfu- 392566-001, ParB domain"/>
    <property type="match status" value="1"/>
</dbReference>
<dbReference type="InterPro" id="IPR003115">
    <property type="entry name" value="ParB/Sulfiredoxin_dom"/>
</dbReference>
<dbReference type="InterPro" id="IPR036086">
    <property type="entry name" value="ParB/Sulfiredoxin_sf"/>
</dbReference>
<dbReference type="InterPro" id="IPR016692">
    <property type="entry name" value="Sulfiredoxin"/>
</dbReference>
<dbReference type="PANTHER" id="PTHR21348">
    <property type="match status" value="1"/>
</dbReference>
<dbReference type="PANTHER" id="PTHR21348:SF2">
    <property type="entry name" value="SULFIREDOXIN-1"/>
    <property type="match status" value="1"/>
</dbReference>
<dbReference type="SMART" id="SM00470">
    <property type="entry name" value="ParB"/>
    <property type="match status" value="1"/>
</dbReference>
<dbReference type="SUPFAM" id="SSF110849">
    <property type="entry name" value="ParB/Sulfiredoxin"/>
    <property type="match status" value="1"/>
</dbReference>
<accession>Q9VX10</accession>
<accession>A0A1B2AK28</accession>
<accession>Q4QPP8</accession>
<proteinExistence type="evidence at protein level"/>
<gene>
    <name evidence="4 6" type="primary">Srx</name>
    <name evidence="6" type="ORF">CG6762</name>
</gene>